<comment type="function">
    <text evidence="1">Shows three enzymatic activities that share a first common step, the attack of thiamine-PP on 2-oxoglutarate (alpha-ketoglutarate, KG), leading to the formation of an enamine-thiamine-PP intermediate upon decarboxylation. Thus, displays KGD activity, catalyzing the decarboxylation from five-carbon 2-oxoglutarate to four-carbon succinate semialdehyde (SSA). Also catalyzes C-C bond formation between the activated aldehyde formed after decarboxylation of alpha-ketoglutarate and the carbonyl of glyoxylate (GLX), to yield 2-hydroxy-3-oxoadipate (HOA), which spontaneously decarboxylates to form 5-hydroxylevulinate (HLA). And is also a component of the 2-oxoglutarate dehydrogenase (ODH) complex, that catalyzes the overall conversion of 2-oxoglutarate to succinyl-CoA and CO(2). The KG decarboxylase and KG dehydrogenase reactions provide two alternative, tightly regulated, pathways connecting the oxidative and reductive branches of the TCA cycle (By similarity).</text>
</comment>
<comment type="catalytic activity">
    <reaction>
        <text>glyoxylate + 2-oxoglutarate + H(+) = 2-hydroxy-3-oxoadipate + CO2</text>
        <dbReference type="Rhea" id="RHEA:14341"/>
        <dbReference type="ChEBI" id="CHEBI:15378"/>
        <dbReference type="ChEBI" id="CHEBI:16526"/>
        <dbReference type="ChEBI" id="CHEBI:16810"/>
        <dbReference type="ChEBI" id="CHEBI:36655"/>
        <dbReference type="ChEBI" id="CHEBI:57712"/>
        <dbReference type="EC" id="2.2.1.5"/>
    </reaction>
</comment>
<comment type="catalytic activity">
    <reaction>
        <text>2-oxoglutarate + H(+) = succinate semialdehyde + CO2</text>
        <dbReference type="Rhea" id="RHEA:10524"/>
        <dbReference type="ChEBI" id="CHEBI:15378"/>
        <dbReference type="ChEBI" id="CHEBI:16526"/>
        <dbReference type="ChEBI" id="CHEBI:16810"/>
        <dbReference type="ChEBI" id="CHEBI:57706"/>
        <dbReference type="EC" id="4.1.1.71"/>
    </reaction>
</comment>
<comment type="catalytic activity">
    <reaction>
        <text>N(6)-[(R)-lipoyl]-L-lysyl-[protein] + 2-oxoglutarate + H(+) = N(6)-[(R)-S(8)-succinyldihydrolipoyl]-L-lysyl-[protein] + CO2</text>
        <dbReference type="Rhea" id="RHEA:12188"/>
        <dbReference type="Rhea" id="RHEA-COMP:10474"/>
        <dbReference type="Rhea" id="RHEA-COMP:20092"/>
        <dbReference type="ChEBI" id="CHEBI:15378"/>
        <dbReference type="ChEBI" id="CHEBI:16526"/>
        <dbReference type="ChEBI" id="CHEBI:16810"/>
        <dbReference type="ChEBI" id="CHEBI:83099"/>
        <dbReference type="ChEBI" id="CHEBI:83120"/>
        <dbReference type="EC" id="1.2.4.2"/>
    </reaction>
</comment>
<comment type="catalytic activity">
    <reaction>
        <text>N(6)-[(R)-dihydrolipoyl]-L-lysyl-[protein] + succinyl-CoA = N(6)-[(R)-S(8)-succinyldihydrolipoyl]-L-lysyl-[protein] + CoA</text>
        <dbReference type="Rhea" id="RHEA:15213"/>
        <dbReference type="Rhea" id="RHEA-COMP:10475"/>
        <dbReference type="Rhea" id="RHEA-COMP:20092"/>
        <dbReference type="ChEBI" id="CHEBI:57287"/>
        <dbReference type="ChEBI" id="CHEBI:57292"/>
        <dbReference type="ChEBI" id="CHEBI:83100"/>
        <dbReference type="ChEBI" id="CHEBI:83120"/>
        <dbReference type="EC" id="2.3.1.61"/>
    </reaction>
</comment>
<comment type="cofactor">
    <cofactor evidence="1">
        <name>Mg(2+)</name>
        <dbReference type="ChEBI" id="CHEBI:18420"/>
    </cofactor>
</comment>
<comment type="cofactor">
    <cofactor evidence="1">
        <name>thiamine diphosphate</name>
        <dbReference type="ChEBI" id="CHEBI:58937"/>
    </cofactor>
</comment>
<comment type="activity regulation">
    <text evidence="1">Alpha-ketoglutarate dehydrogenase and decarboxylase activities are inhibited by unphosphorylated GarA, and allosterically activated by acetyl-CoA, the main substrate of the TCA cycle.</text>
</comment>
<comment type="pathway">
    <text>Carbohydrate metabolism; tricarboxylic acid cycle; succinate from 2-oxoglutarate (transferase route): step 1/2.</text>
</comment>
<comment type="pathway">
    <text>Carbohydrate metabolism; tricarboxylic acid cycle; succinyl-CoA from 2-oxoglutarate (dehydrogenase route): step 1/1.</text>
</comment>
<comment type="subunit">
    <text evidence="1">Homodimer. The 2-oxoglutarate dehydrogenase (ODH) complex contains multiple copies of three enzymatic components: 2-oxoglutarate dehydrogenase (E1), dihydrolipoamide succinyltransferase (E2) and lipoamide dehydrogenase (E3) (By similarity).</text>
</comment>
<comment type="domain">
    <text evidence="1">Is a fusion protein with two major domains exhibiting structural features of an E1 and E2 protein, and a short sequence stretch of E1 localized at the N-terminus, which is connected by a linker region to the rest of the protein.</text>
</comment>
<comment type="similarity">
    <text evidence="5">Belongs to the 2-oxoacid dehydrogenase family. Kgd subfamily.</text>
</comment>
<dbReference type="EC" id="2.2.1.5"/>
<dbReference type="EC" id="4.1.1.71"/>
<dbReference type="EC" id="1.2.4.2"/>
<dbReference type="EC" id="2.3.1.61"/>
<dbReference type="EMBL" id="CP000325">
    <property type="protein sequence ID" value="ABL06466.1"/>
    <property type="molecule type" value="Genomic_DNA"/>
</dbReference>
<dbReference type="RefSeq" id="WP_011742065.1">
    <property type="nucleotide sequence ID" value="NC_008611.1"/>
</dbReference>
<dbReference type="SMR" id="A0PVU7"/>
<dbReference type="KEGG" id="mul:MUL_4500"/>
<dbReference type="eggNOG" id="COG0508">
    <property type="taxonomic scope" value="Bacteria"/>
</dbReference>
<dbReference type="eggNOG" id="COG0567">
    <property type="taxonomic scope" value="Bacteria"/>
</dbReference>
<dbReference type="HOGENOM" id="CLU_004709_1_0_11"/>
<dbReference type="UniPathway" id="UPA00223">
    <property type="reaction ID" value="UER00997"/>
</dbReference>
<dbReference type="UniPathway" id="UPA00223">
    <property type="reaction ID" value="UER01001"/>
</dbReference>
<dbReference type="Proteomes" id="UP000000765">
    <property type="component" value="Chromosome"/>
</dbReference>
<dbReference type="GO" id="GO:0005829">
    <property type="term" value="C:cytosol"/>
    <property type="evidence" value="ECO:0007669"/>
    <property type="project" value="TreeGrafter"/>
</dbReference>
<dbReference type="GO" id="GO:0045252">
    <property type="term" value="C:oxoglutarate dehydrogenase complex"/>
    <property type="evidence" value="ECO:0007669"/>
    <property type="project" value="TreeGrafter"/>
</dbReference>
<dbReference type="GO" id="GO:0050439">
    <property type="term" value="F:2-hydroxy-3-oxoadipate synthase activity"/>
    <property type="evidence" value="ECO:0007669"/>
    <property type="project" value="UniProtKB-EC"/>
</dbReference>
<dbReference type="GO" id="GO:0008683">
    <property type="term" value="F:2-oxoglutarate decarboxylase activity"/>
    <property type="evidence" value="ECO:0007669"/>
    <property type="project" value="UniProtKB-EC"/>
</dbReference>
<dbReference type="GO" id="GO:0004149">
    <property type="term" value="F:dihydrolipoyllysine-residue succinyltransferase activity"/>
    <property type="evidence" value="ECO:0007669"/>
    <property type="project" value="UniProtKB-EC"/>
</dbReference>
<dbReference type="GO" id="GO:0000287">
    <property type="term" value="F:magnesium ion binding"/>
    <property type="evidence" value="ECO:0007669"/>
    <property type="project" value="UniProtKB-ARBA"/>
</dbReference>
<dbReference type="GO" id="GO:0004591">
    <property type="term" value="F:oxoglutarate dehydrogenase (succinyl-transferring) activity"/>
    <property type="evidence" value="ECO:0007669"/>
    <property type="project" value="UniProtKB-EC"/>
</dbReference>
<dbReference type="GO" id="GO:0030976">
    <property type="term" value="F:thiamine pyrophosphate binding"/>
    <property type="evidence" value="ECO:0007669"/>
    <property type="project" value="InterPro"/>
</dbReference>
<dbReference type="GO" id="GO:0006099">
    <property type="term" value="P:tricarboxylic acid cycle"/>
    <property type="evidence" value="ECO:0007669"/>
    <property type="project" value="UniProtKB-UniPathway"/>
</dbReference>
<dbReference type="CDD" id="cd02016">
    <property type="entry name" value="TPP_E1_OGDC_like"/>
    <property type="match status" value="1"/>
</dbReference>
<dbReference type="FunFam" id="3.30.559.10:FF:000011">
    <property type="entry name" value="2-oxoglutarate dehydrogenase E1 component"/>
    <property type="match status" value="1"/>
</dbReference>
<dbReference type="FunFam" id="3.40.50.11610:FF:000002">
    <property type="entry name" value="2-oxoglutarate dehydrogenase E1 component"/>
    <property type="match status" value="1"/>
</dbReference>
<dbReference type="FunFam" id="3.40.50.970:FF:000018">
    <property type="entry name" value="2-oxoglutarate dehydrogenase E1 component"/>
    <property type="match status" value="1"/>
</dbReference>
<dbReference type="Gene3D" id="3.40.50.12470">
    <property type="match status" value="1"/>
</dbReference>
<dbReference type="Gene3D" id="3.40.50.970">
    <property type="match status" value="1"/>
</dbReference>
<dbReference type="Gene3D" id="3.30.559.10">
    <property type="entry name" value="Chloramphenicol acetyltransferase-like domain"/>
    <property type="match status" value="1"/>
</dbReference>
<dbReference type="Gene3D" id="3.40.50.11610">
    <property type="entry name" value="Multifunctional 2-oxoglutarate metabolism enzyme, C-terminal domain"/>
    <property type="match status" value="1"/>
</dbReference>
<dbReference type="Gene3D" id="1.10.287.1150">
    <property type="entry name" value="TPP helical domain"/>
    <property type="match status" value="1"/>
</dbReference>
<dbReference type="InterPro" id="IPR001078">
    <property type="entry name" value="2-oxoacid_DH_actylTfrase"/>
</dbReference>
<dbReference type="InterPro" id="IPR032106">
    <property type="entry name" value="2-oxogl_dehyd_N"/>
</dbReference>
<dbReference type="InterPro" id="IPR011603">
    <property type="entry name" value="2oxoglutarate_DH_E1"/>
</dbReference>
<dbReference type="InterPro" id="IPR023213">
    <property type="entry name" value="CAT-like_dom_sf"/>
</dbReference>
<dbReference type="InterPro" id="IPR001017">
    <property type="entry name" value="DH_E1"/>
</dbReference>
<dbReference type="InterPro" id="IPR042179">
    <property type="entry name" value="KGD_C_sf"/>
</dbReference>
<dbReference type="InterPro" id="IPR031717">
    <property type="entry name" value="ODO-1/KGD_C"/>
</dbReference>
<dbReference type="InterPro" id="IPR029061">
    <property type="entry name" value="THDP-binding"/>
</dbReference>
<dbReference type="InterPro" id="IPR005475">
    <property type="entry name" value="Transketolase-like_Pyr-bd"/>
</dbReference>
<dbReference type="NCBIfam" id="TIGR00239">
    <property type="entry name" value="2oxo_dh_E1"/>
    <property type="match status" value="1"/>
</dbReference>
<dbReference type="NCBIfam" id="NF006914">
    <property type="entry name" value="PRK09404.1"/>
    <property type="match status" value="1"/>
</dbReference>
<dbReference type="NCBIfam" id="NF008907">
    <property type="entry name" value="PRK12270.1"/>
    <property type="match status" value="1"/>
</dbReference>
<dbReference type="PANTHER" id="PTHR23152:SF4">
    <property type="entry name" value="2-OXOADIPATE DEHYDROGENASE COMPLEX COMPONENT E1"/>
    <property type="match status" value="1"/>
</dbReference>
<dbReference type="PANTHER" id="PTHR23152">
    <property type="entry name" value="2-OXOGLUTARATE DEHYDROGENASE"/>
    <property type="match status" value="1"/>
</dbReference>
<dbReference type="Pfam" id="PF00198">
    <property type="entry name" value="2-oxoacid_dh"/>
    <property type="match status" value="1"/>
</dbReference>
<dbReference type="Pfam" id="PF16078">
    <property type="entry name" value="2-oxogl_dehyd_N"/>
    <property type="match status" value="1"/>
</dbReference>
<dbReference type="Pfam" id="PF00676">
    <property type="entry name" value="E1_dh"/>
    <property type="match status" value="1"/>
</dbReference>
<dbReference type="Pfam" id="PF16870">
    <property type="entry name" value="OxoGdeHyase_C"/>
    <property type="match status" value="1"/>
</dbReference>
<dbReference type="Pfam" id="PF02779">
    <property type="entry name" value="Transket_pyr"/>
    <property type="match status" value="1"/>
</dbReference>
<dbReference type="PIRSF" id="PIRSF000157">
    <property type="entry name" value="Oxoglu_dh_E1"/>
    <property type="match status" value="1"/>
</dbReference>
<dbReference type="SMART" id="SM00861">
    <property type="entry name" value="Transket_pyr"/>
    <property type="match status" value="1"/>
</dbReference>
<dbReference type="SUPFAM" id="SSF52777">
    <property type="entry name" value="CoA-dependent acyltransferases"/>
    <property type="match status" value="1"/>
</dbReference>
<dbReference type="SUPFAM" id="SSF52518">
    <property type="entry name" value="Thiamin diphosphate-binding fold (THDP-binding)"/>
    <property type="match status" value="2"/>
</dbReference>
<proteinExistence type="inferred from homology"/>
<name>KGD_MYCUA</name>
<evidence type="ECO:0000250" key="1"/>
<evidence type="ECO:0000250" key="2">
    <source>
        <dbReference type="UniProtKB" id="A0R2B1"/>
    </source>
</evidence>
<evidence type="ECO:0000255" key="3"/>
<evidence type="ECO:0000256" key="4">
    <source>
        <dbReference type="SAM" id="MobiDB-lite"/>
    </source>
</evidence>
<evidence type="ECO:0000305" key="5"/>
<sequence>MANISSPFGQNEWLVEEMYRKFRDDPSSVDPSWHEFLVDYNPESTQEATEPAVVKPAAAPAKPAPAPAPAKPAAGPPAAGNGSPAAAPSAKPAAAPAKAPAPPPAEGDEMQVLRGAAAAVVKNMSASLDVPTATSVRAVPAKLLIDNRIVINNQLKRNRGGKISFTHLLGYALVQAVKKFPNMNRHYLDVDGKPNAVTPAHTNLGLAIDLQGKDGKRALVVAGIKRCETMRFAQFVTAYEDIVRRARDGKLTAEDFSGVTISLTNPGTIGTVHSVPRLMAGQGAIIGVGAMEYPAEFQGASEERIAELGIGKLITLTSTYDHRIIQGAESGDFLRTIHQMLLADEFWDEIFRELSIPYLPVRWRPDNPDSIVDKNARIIELIAAYRNRGHLMADIDPLRLDKTRFRSHPDLDVCTHGLTLWDLDRSFKVGGCFAGPQNMKLRDVLSILRDTYCRHVGVEYTHILEPEQQQWLQQRVEAKHVKPTVAQQKYVLSKLNAAEAFETFLQTKYVGQKRFSLEGAESVIPMMDAAIDQCAEYGLDEVVIGMPHRGRLNVLANIVGKPYSQIFSEFEGNLNPSQAHGSGDVKYHLGATGVYLQMFGDNDIQVSLTANPSHLEAVDPVLEGLVRAKQDLLEHGETDTENQRAFSVVPMMLHGDAAFAGQGVVAETLNLANLPGYRVGGTIHIIVNNQIGFTTAPEYSRSTEYCTDVAKTIGAPIFHVNGDDPEACVWVARLAVDFRQRFNKDVIIDMLCYRRRGHNEGDDPSMTNPRMYDVVDTKRGVRKSYTEALIGRGDISIKEAEDALRDYQGQLEQVFNEVRELEKHGAQPSESVESDQMIPAGLATAVDKSLLARIGDAFLAVPDGFTTHPRVQPVLEKRREMAYEGKIDWAFAELLALGSLVAEGKLVRFSGQDTRRGTFSQRHSVIIDRHTREEFTPLQLLTTNKDGSPTGGKFLVYDSPLSEYAAVGFEYGYTVGNPDAVVLWEAQFGDFVNGAQSIIDEFISSGEAKWGQLSNVVLLLPHGHEGQGPDHTSGRIERFLQLWAEGSMTIAMPSTPSNYFHLLRRHALDGIQRPLIVFTPKSMLRNKAAVSDIKDFTEIKFRSVLEEPTYEDGVGDRNLVNRILLTSGKIYYEMVARKAKDKREDVAIVRVEQLAPLPRRRLRETLDRYPNAKEFFWVQEEPANQGAWPRFGLELPELLPEKLSGVKRISRRAMSAPSSGSSKVHAVEQQEILDTAFG</sequence>
<reference key="1">
    <citation type="journal article" date="2007" name="Genome Res.">
        <title>Reductive evolution and niche adaptation inferred from the genome of Mycobacterium ulcerans, the causative agent of Buruli ulcer.</title>
        <authorList>
            <person name="Stinear T.P."/>
            <person name="Seemann T."/>
            <person name="Pidot S."/>
            <person name="Frigui W."/>
            <person name="Reysset G."/>
            <person name="Garnier T."/>
            <person name="Meurice G."/>
            <person name="Simon D."/>
            <person name="Bouchier C."/>
            <person name="Ma L."/>
            <person name="Tichit M."/>
            <person name="Porter J.L."/>
            <person name="Ryan J."/>
            <person name="Johnson P.D.R."/>
            <person name="Davies J.K."/>
            <person name="Jenkin G.A."/>
            <person name="Small P.L.C."/>
            <person name="Jones L.M."/>
            <person name="Tekaia F."/>
            <person name="Laval F."/>
            <person name="Daffe M."/>
            <person name="Parkhill J."/>
            <person name="Cole S.T."/>
        </authorList>
    </citation>
    <scope>NUCLEOTIDE SEQUENCE [LARGE SCALE GENOMIC DNA]</scope>
    <source>
        <strain>Agy99</strain>
    </source>
</reference>
<keyword id="KW-0012">Acyltransferase</keyword>
<keyword id="KW-0021">Allosteric enzyme</keyword>
<keyword id="KW-0175">Coiled coil</keyword>
<keyword id="KW-0210">Decarboxylase</keyword>
<keyword id="KW-0456">Lyase</keyword>
<keyword id="KW-0460">Magnesium</keyword>
<keyword id="KW-0479">Metal-binding</keyword>
<keyword id="KW-0511">Multifunctional enzyme</keyword>
<keyword id="KW-0560">Oxidoreductase</keyword>
<keyword id="KW-0786">Thiamine pyrophosphate</keyword>
<keyword id="KW-0808">Transferase</keyword>
<keyword id="KW-0816">Tricarboxylic acid cycle</keyword>
<gene>
    <name type="primary">kgd</name>
    <name type="ordered locus">MUL_4500</name>
</gene>
<organism>
    <name type="scientific">Mycobacterium ulcerans (strain Agy99)</name>
    <dbReference type="NCBI Taxonomy" id="362242"/>
    <lineage>
        <taxon>Bacteria</taxon>
        <taxon>Bacillati</taxon>
        <taxon>Actinomycetota</taxon>
        <taxon>Actinomycetes</taxon>
        <taxon>Mycobacteriales</taxon>
        <taxon>Mycobacteriaceae</taxon>
        <taxon>Mycobacterium</taxon>
        <taxon>Mycobacterium ulcerans group</taxon>
    </lineage>
</organism>
<protein>
    <recommendedName>
        <fullName>Multifunctional 2-oxoglutarate metabolism enzyme</fullName>
    </recommendedName>
    <alternativeName>
        <fullName>2-hydroxy-3-oxoadipate synthase</fullName>
        <shortName>HOA synthase</shortName>
        <shortName>HOAS</shortName>
        <ecNumber>2.2.1.5</ecNumber>
    </alternativeName>
    <alternativeName>
        <fullName>2-oxoglutarate carboxy-lyase</fullName>
    </alternativeName>
    <alternativeName>
        <fullName>2-oxoglutarate decarboxylase</fullName>
    </alternativeName>
    <alternativeName>
        <fullName>Alpha-ketoglutarate decarboxylase</fullName>
        <shortName>KG decarboxylase</shortName>
        <shortName>KGD</shortName>
        <ecNumber>4.1.1.71</ecNumber>
    </alternativeName>
    <alternativeName>
        <fullName>Alpha-ketoglutarate-glyoxylate carboligase</fullName>
    </alternativeName>
    <domain>
        <recommendedName>
            <fullName>2-oxoglutarate dehydrogenase E1 component</fullName>
            <shortName>ODH E1 component</shortName>
            <ecNumber>1.2.4.2</ecNumber>
        </recommendedName>
        <alternativeName>
            <fullName>Alpha-ketoglutarate dehydrogenase E1 component</fullName>
            <shortName>KDH E1 component</shortName>
        </alternativeName>
    </domain>
    <domain>
        <recommendedName>
            <fullName>Dihydrolipoyllysine-residue succinyltransferase component of 2-oxoglutarate dehydrogenase complex</fullName>
            <ecNumber>2.3.1.61</ecNumber>
        </recommendedName>
        <alternativeName>
            <fullName>2-oxoglutarate dehydrogenase complex E2 component</fullName>
            <shortName>ODH E2 component</shortName>
            <shortName>OGDC-E2</shortName>
        </alternativeName>
        <alternativeName>
            <fullName>Dihydrolipoamide succinyltransferase</fullName>
        </alternativeName>
    </domain>
</protein>
<accession>A0PVU7</accession>
<feature type="chain" id="PRO_0000310724" description="Multifunctional 2-oxoglutarate metabolism enzyme">
    <location>
        <begin position="1"/>
        <end position="1238"/>
    </location>
</feature>
<feature type="region of interest" description="2-oxoglutarate dehydrogenase E1, N-terminal part">
    <location>
        <begin position="1"/>
        <end position="41"/>
    </location>
</feature>
<feature type="region of interest" description="Disordered" evidence="4">
    <location>
        <begin position="40"/>
        <end position="108"/>
    </location>
</feature>
<feature type="region of interest" description="Linker">
    <location>
        <begin position="42"/>
        <end position="94"/>
    </location>
</feature>
<feature type="region of interest" description="Succinyltransferase E2">
    <location>
        <begin position="95"/>
        <end position="343"/>
    </location>
</feature>
<feature type="region of interest" description="2-oxoglutarate dehydrogenase E1, C-terminal part">
    <location>
        <begin position="344"/>
        <end position="1238"/>
    </location>
</feature>
<feature type="coiled-coil region" evidence="3">
    <location>
        <begin position="794"/>
        <end position="824"/>
    </location>
</feature>
<feature type="compositionally biased region" description="Low complexity" evidence="4">
    <location>
        <begin position="51"/>
        <end position="61"/>
    </location>
</feature>
<feature type="compositionally biased region" description="Low complexity" evidence="4">
    <location>
        <begin position="71"/>
        <end position="98"/>
    </location>
</feature>
<feature type="active site" description="Proton acceptor; for succinyltransferase activity" evidence="1">
    <location>
        <position position="322"/>
    </location>
</feature>
<feature type="binding site" evidence="2">
    <location>
        <position position="549"/>
    </location>
    <ligand>
        <name>thiamine diphosphate</name>
        <dbReference type="ChEBI" id="CHEBI:58937"/>
    </ligand>
</feature>
<feature type="binding site" evidence="2">
    <location>
        <position position="588"/>
    </location>
    <ligand>
        <name>2-oxoglutarate</name>
        <dbReference type="ChEBI" id="CHEBI:16810"/>
    </ligand>
</feature>
<feature type="binding site" evidence="2">
    <location>
        <position position="613"/>
    </location>
    <ligand>
        <name>2-oxoglutarate</name>
        <dbReference type="ChEBI" id="CHEBI:16810"/>
    </ligand>
</feature>
<feature type="binding site" evidence="2">
    <location>
        <position position="613"/>
    </location>
    <ligand>
        <name>thiamine diphosphate</name>
        <dbReference type="ChEBI" id="CHEBI:58937"/>
    </ligand>
</feature>
<feature type="binding site" evidence="2">
    <location>
        <position position="615"/>
    </location>
    <ligand>
        <name>thiamine diphosphate</name>
        <dbReference type="ChEBI" id="CHEBI:58937"/>
    </ligand>
</feature>
<feature type="binding site" evidence="2">
    <location>
        <position position="656"/>
    </location>
    <ligand>
        <name>Mg(2+)</name>
        <dbReference type="ChEBI" id="CHEBI:18420"/>
    </ligand>
</feature>
<feature type="binding site" evidence="2">
    <location>
        <position position="656"/>
    </location>
    <ligand>
        <name>thiamine diphosphate</name>
        <dbReference type="ChEBI" id="CHEBI:58937"/>
    </ligand>
</feature>
<feature type="binding site" evidence="2">
    <location>
        <position position="657"/>
    </location>
    <ligand>
        <name>thiamine diphosphate</name>
        <dbReference type="ChEBI" id="CHEBI:58937"/>
    </ligand>
</feature>
<feature type="binding site" evidence="2">
    <location>
        <position position="658"/>
    </location>
    <ligand>
        <name>thiamine diphosphate</name>
        <dbReference type="ChEBI" id="CHEBI:58937"/>
    </ligand>
</feature>
<feature type="binding site" evidence="2">
    <location>
        <position position="689"/>
    </location>
    <ligand>
        <name>Mg(2+)</name>
        <dbReference type="ChEBI" id="CHEBI:18420"/>
    </ligand>
</feature>
<feature type="binding site" evidence="2">
    <location>
        <position position="689"/>
    </location>
    <ligand>
        <name>thiamine diphosphate</name>
        <dbReference type="ChEBI" id="CHEBI:58937"/>
    </ligand>
</feature>
<feature type="binding site" evidence="2">
    <location>
        <position position="691"/>
    </location>
    <ligand>
        <name>Mg(2+)</name>
        <dbReference type="ChEBI" id="CHEBI:18420"/>
    </ligand>
</feature>
<feature type="binding site" evidence="2">
    <location>
        <position position="1031"/>
    </location>
    <ligand>
        <name>2-oxoglutarate</name>
        <dbReference type="ChEBI" id="CHEBI:16810"/>
    </ligand>
</feature>
<feature type="binding site" evidence="2">
    <location>
        <position position="1049"/>
    </location>
    <ligand>
        <name>acetyl-CoA</name>
        <dbReference type="ChEBI" id="CHEBI:57288"/>
        <note>allosteric activator</note>
    </ligand>
</feature>
<feature type="binding site" evidence="2">
    <location>
        <position position="1065"/>
    </location>
    <ligand>
        <name>acetyl-CoA</name>
        <dbReference type="ChEBI" id="CHEBI:57288"/>
        <note>allosteric activator</note>
    </ligand>
</feature>
<feature type="binding site" evidence="2">
    <location>
        <position position="1100"/>
    </location>
    <ligand>
        <name>acetyl-CoA</name>
        <dbReference type="ChEBI" id="CHEBI:57288"/>
        <note>allosteric activator</note>
    </ligand>
</feature>
<feature type="binding site" evidence="2">
    <location>
        <position position="1103"/>
    </location>
    <ligand>
        <name>acetyl-CoA</name>
        <dbReference type="ChEBI" id="CHEBI:57288"/>
        <note>allosteric activator</note>
    </ligand>
</feature>
<feature type="binding site" evidence="2">
    <location>
        <position position="1153"/>
    </location>
    <ligand>
        <name>acetyl-CoA</name>
        <dbReference type="ChEBI" id="CHEBI:57288"/>
        <note>allosteric activator</note>
    </ligand>
</feature>
<feature type="binding site" evidence="2">
    <location>
        <position position="1160"/>
    </location>
    <ligand>
        <name>acetyl-CoA</name>
        <dbReference type="ChEBI" id="CHEBI:57288"/>
        <note>allosteric activator</note>
    </ligand>
</feature>
<feature type="binding site" evidence="2">
    <location>
        <position position="1161"/>
    </location>
    <ligand>
        <name>acetyl-CoA</name>
        <dbReference type="ChEBI" id="CHEBI:57288"/>
        <note>allosteric activator</note>
    </ligand>
</feature>